<comment type="function">
    <text evidence="1">Catalyzes the conversion of 4-hydroxy-tetrahydrodipicolinate (HTPA) to tetrahydrodipicolinate.</text>
</comment>
<comment type="catalytic activity">
    <reaction evidence="1">
        <text>(S)-2,3,4,5-tetrahydrodipicolinate + NAD(+) + H2O = (2S,4S)-4-hydroxy-2,3,4,5-tetrahydrodipicolinate + NADH + H(+)</text>
        <dbReference type="Rhea" id="RHEA:35323"/>
        <dbReference type="ChEBI" id="CHEBI:15377"/>
        <dbReference type="ChEBI" id="CHEBI:15378"/>
        <dbReference type="ChEBI" id="CHEBI:16845"/>
        <dbReference type="ChEBI" id="CHEBI:57540"/>
        <dbReference type="ChEBI" id="CHEBI:57945"/>
        <dbReference type="ChEBI" id="CHEBI:67139"/>
        <dbReference type="EC" id="1.17.1.8"/>
    </reaction>
</comment>
<comment type="catalytic activity">
    <reaction evidence="1">
        <text>(S)-2,3,4,5-tetrahydrodipicolinate + NADP(+) + H2O = (2S,4S)-4-hydroxy-2,3,4,5-tetrahydrodipicolinate + NADPH + H(+)</text>
        <dbReference type="Rhea" id="RHEA:35331"/>
        <dbReference type="ChEBI" id="CHEBI:15377"/>
        <dbReference type="ChEBI" id="CHEBI:15378"/>
        <dbReference type="ChEBI" id="CHEBI:16845"/>
        <dbReference type="ChEBI" id="CHEBI:57783"/>
        <dbReference type="ChEBI" id="CHEBI:58349"/>
        <dbReference type="ChEBI" id="CHEBI:67139"/>
        <dbReference type="EC" id="1.17.1.8"/>
    </reaction>
</comment>
<comment type="pathway">
    <text evidence="1">Amino-acid biosynthesis; L-lysine biosynthesis via DAP pathway; (S)-tetrahydrodipicolinate from L-aspartate: step 4/4.</text>
</comment>
<comment type="subcellular location">
    <subcellularLocation>
        <location evidence="1">Cytoplasm</location>
    </subcellularLocation>
</comment>
<comment type="similarity">
    <text evidence="1">Belongs to the DapB family.</text>
</comment>
<comment type="caution">
    <text evidence="2">Was originally thought to be a dihydrodipicolinate reductase (DHDPR), catalyzing the conversion of dihydrodipicolinate to tetrahydrodipicolinate. However, it was shown in E.coli that the substrate of the enzymatic reaction is not dihydrodipicolinate (DHDP) but in fact (2S,4S)-4-hydroxy-2,3,4,5-tetrahydrodipicolinic acid (HTPA), the product released by the DapA-catalyzed reaction.</text>
</comment>
<feature type="chain" id="PRO_1000093968" description="4-hydroxy-tetrahydrodipicolinate reductase">
    <location>
        <begin position="1"/>
        <end position="267"/>
    </location>
</feature>
<feature type="active site" description="Proton donor/acceptor" evidence="1">
    <location>
        <position position="154"/>
    </location>
</feature>
<feature type="active site" description="Proton donor" evidence="1">
    <location>
        <position position="158"/>
    </location>
</feature>
<feature type="binding site" evidence="1">
    <location>
        <begin position="10"/>
        <end position="15"/>
    </location>
    <ligand>
        <name>NAD(+)</name>
        <dbReference type="ChEBI" id="CHEBI:57540"/>
    </ligand>
</feature>
<feature type="binding site" evidence="1">
    <location>
        <position position="37"/>
    </location>
    <ligand>
        <name>NADP(+)</name>
        <dbReference type="ChEBI" id="CHEBI:58349"/>
    </ligand>
</feature>
<feature type="binding site" evidence="1">
    <location>
        <begin position="99"/>
        <end position="101"/>
    </location>
    <ligand>
        <name>NAD(+)</name>
        <dbReference type="ChEBI" id="CHEBI:57540"/>
    </ligand>
</feature>
<feature type="binding site" evidence="1">
    <location>
        <begin position="122"/>
        <end position="125"/>
    </location>
    <ligand>
        <name>NAD(+)</name>
        <dbReference type="ChEBI" id="CHEBI:57540"/>
    </ligand>
</feature>
<feature type="binding site" evidence="1">
    <location>
        <position position="155"/>
    </location>
    <ligand>
        <name>(S)-2,3,4,5-tetrahydrodipicolinate</name>
        <dbReference type="ChEBI" id="CHEBI:16845"/>
    </ligand>
</feature>
<feature type="binding site" evidence="1">
    <location>
        <begin position="164"/>
        <end position="165"/>
    </location>
    <ligand>
        <name>(S)-2,3,4,5-tetrahydrodipicolinate</name>
        <dbReference type="ChEBI" id="CHEBI:16845"/>
    </ligand>
</feature>
<protein>
    <recommendedName>
        <fullName evidence="1">4-hydroxy-tetrahydrodipicolinate reductase</fullName>
        <shortName evidence="1">HTPA reductase</shortName>
        <ecNumber evidence="1">1.17.1.8</ecNumber>
    </recommendedName>
</protein>
<accession>Q2GH22</accession>
<dbReference type="EC" id="1.17.1.8" evidence="1"/>
<dbReference type="EMBL" id="CP000236">
    <property type="protein sequence ID" value="ABD45540.1"/>
    <property type="molecule type" value="Genomic_DNA"/>
</dbReference>
<dbReference type="RefSeq" id="WP_011452608.1">
    <property type="nucleotide sequence ID" value="NC_007799.1"/>
</dbReference>
<dbReference type="SMR" id="Q2GH22"/>
<dbReference type="STRING" id="205920.ECH_0443"/>
<dbReference type="KEGG" id="ech:ECH_0443"/>
<dbReference type="eggNOG" id="COG0289">
    <property type="taxonomic scope" value="Bacteria"/>
</dbReference>
<dbReference type="HOGENOM" id="CLU_047479_2_2_5"/>
<dbReference type="OrthoDB" id="9790352at2"/>
<dbReference type="UniPathway" id="UPA00034">
    <property type="reaction ID" value="UER00018"/>
</dbReference>
<dbReference type="Proteomes" id="UP000008320">
    <property type="component" value="Chromosome"/>
</dbReference>
<dbReference type="GO" id="GO:0005737">
    <property type="term" value="C:cytoplasm"/>
    <property type="evidence" value="ECO:0007669"/>
    <property type="project" value="UniProtKB-SubCell"/>
</dbReference>
<dbReference type="GO" id="GO:0008839">
    <property type="term" value="F:4-hydroxy-tetrahydrodipicolinate reductase"/>
    <property type="evidence" value="ECO:0007669"/>
    <property type="project" value="UniProtKB-EC"/>
</dbReference>
<dbReference type="GO" id="GO:0051287">
    <property type="term" value="F:NAD binding"/>
    <property type="evidence" value="ECO:0007669"/>
    <property type="project" value="UniProtKB-UniRule"/>
</dbReference>
<dbReference type="GO" id="GO:0050661">
    <property type="term" value="F:NADP binding"/>
    <property type="evidence" value="ECO:0007669"/>
    <property type="project" value="UniProtKB-UniRule"/>
</dbReference>
<dbReference type="GO" id="GO:0016726">
    <property type="term" value="F:oxidoreductase activity, acting on CH or CH2 groups, NAD or NADP as acceptor"/>
    <property type="evidence" value="ECO:0007669"/>
    <property type="project" value="UniProtKB-UniRule"/>
</dbReference>
<dbReference type="GO" id="GO:0019877">
    <property type="term" value="P:diaminopimelate biosynthetic process"/>
    <property type="evidence" value="ECO:0007669"/>
    <property type="project" value="UniProtKB-UniRule"/>
</dbReference>
<dbReference type="GO" id="GO:0009089">
    <property type="term" value="P:lysine biosynthetic process via diaminopimelate"/>
    <property type="evidence" value="ECO:0007669"/>
    <property type="project" value="UniProtKB-UniRule"/>
</dbReference>
<dbReference type="CDD" id="cd02274">
    <property type="entry name" value="DHDPR_N"/>
    <property type="match status" value="1"/>
</dbReference>
<dbReference type="Gene3D" id="3.30.360.10">
    <property type="entry name" value="Dihydrodipicolinate Reductase, domain 2"/>
    <property type="match status" value="1"/>
</dbReference>
<dbReference type="Gene3D" id="3.40.50.720">
    <property type="entry name" value="NAD(P)-binding Rossmann-like Domain"/>
    <property type="match status" value="1"/>
</dbReference>
<dbReference type="HAMAP" id="MF_00102">
    <property type="entry name" value="DapB"/>
    <property type="match status" value="1"/>
</dbReference>
<dbReference type="InterPro" id="IPR022663">
    <property type="entry name" value="DapB_C"/>
</dbReference>
<dbReference type="InterPro" id="IPR000846">
    <property type="entry name" value="DapB_N"/>
</dbReference>
<dbReference type="InterPro" id="IPR022664">
    <property type="entry name" value="DapB_N_CS"/>
</dbReference>
<dbReference type="InterPro" id="IPR023940">
    <property type="entry name" value="DHDPR_bac"/>
</dbReference>
<dbReference type="InterPro" id="IPR036291">
    <property type="entry name" value="NAD(P)-bd_dom_sf"/>
</dbReference>
<dbReference type="NCBIfam" id="TIGR00036">
    <property type="entry name" value="dapB"/>
    <property type="match status" value="1"/>
</dbReference>
<dbReference type="PANTHER" id="PTHR20836:SF0">
    <property type="entry name" value="4-HYDROXY-TETRAHYDRODIPICOLINATE REDUCTASE 1, CHLOROPLASTIC-RELATED"/>
    <property type="match status" value="1"/>
</dbReference>
<dbReference type="PANTHER" id="PTHR20836">
    <property type="entry name" value="DIHYDRODIPICOLINATE REDUCTASE"/>
    <property type="match status" value="1"/>
</dbReference>
<dbReference type="Pfam" id="PF05173">
    <property type="entry name" value="DapB_C"/>
    <property type="match status" value="1"/>
</dbReference>
<dbReference type="Pfam" id="PF01113">
    <property type="entry name" value="DapB_N"/>
    <property type="match status" value="1"/>
</dbReference>
<dbReference type="PIRSF" id="PIRSF000161">
    <property type="entry name" value="DHPR"/>
    <property type="match status" value="1"/>
</dbReference>
<dbReference type="SUPFAM" id="SSF55347">
    <property type="entry name" value="Glyceraldehyde-3-phosphate dehydrogenase-like, C-terminal domain"/>
    <property type="match status" value="1"/>
</dbReference>
<dbReference type="SUPFAM" id="SSF51735">
    <property type="entry name" value="NAD(P)-binding Rossmann-fold domains"/>
    <property type="match status" value="1"/>
</dbReference>
<dbReference type="PROSITE" id="PS01298">
    <property type="entry name" value="DAPB"/>
    <property type="match status" value="1"/>
</dbReference>
<organism>
    <name type="scientific">Ehrlichia chaffeensis (strain ATCC CRL-10679 / Arkansas)</name>
    <dbReference type="NCBI Taxonomy" id="205920"/>
    <lineage>
        <taxon>Bacteria</taxon>
        <taxon>Pseudomonadati</taxon>
        <taxon>Pseudomonadota</taxon>
        <taxon>Alphaproteobacteria</taxon>
        <taxon>Rickettsiales</taxon>
        <taxon>Anaplasmataceae</taxon>
        <taxon>Ehrlichia</taxon>
    </lineage>
</organism>
<evidence type="ECO:0000255" key="1">
    <source>
        <dbReference type="HAMAP-Rule" id="MF_00102"/>
    </source>
</evidence>
<evidence type="ECO:0000305" key="2"/>
<name>DAPB_EHRCR</name>
<proteinExistence type="inferred from homology"/>
<gene>
    <name evidence="1" type="primary">dapB</name>
    <name type="ordered locus">ECH_0443</name>
</gene>
<reference key="1">
    <citation type="journal article" date="2006" name="PLoS Genet.">
        <title>Comparative genomics of emerging human ehrlichiosis agents.</title>
        <authorList>
            <person name="Dunning Hotopp J.C."/>
            <person name="Lin M."/>
            <person name="Madupu R."/>
            <person name="Crabtree J."/>
            <person name="Angiuoli S.V."/>
            <person name="Eisen J.A."/>
            <person name="Seshadri R."/>
            <person name="Ren Q."/>
            <person name="Wu M."/>
            <person name="Utterback T.R."/>
            <person name="Smith S."/>
            <person name="Lewis M."/>
            <person name="Khouri H."/>
            <person name="Zhang C."/>
            <person name="Niu H."/>
            <person name="Lin Q."/>
            <person name="Ohashi N."/>
            <person name="Zhi N."/>
            <person name="Nelson W.C."/>
            <person name="Brinkac L.M."/>
            <person name="Dodson R.J."/>
            <person name="Rosovitz M.J."/>
            <person name="Sundaram J.P."/>
            <person name="Daugherty S.C."/>
            <person name="Davidsen T."/>
            <person name="Durkin A.S."/>
            <person name="Gwinn M.L."/>
            <person name="Haft D.H."/>
            <person name="Selengut J.D."/>
            <person name="Sullivan S.A."/>
            <person name="Zafar N."/>
            <person name="Zhou L."/>
            <person name="Benahmed F."/>
            <person name="Forberger H."/>
            <person name="Halpin R."/>
            <person name="Mulligan S."/>
            <person name="Robinson J."/>
            <person name="White O."/>
            <person name="Rikihisa Y."/>
            <person name="Tettelin H."/>
        </authorList>
    </citation>
    <scope>NUCLEOTIDE SEQUENCE [LARGE SCALE GENOMIC DNA]</scope>
    <source>
        <strain>ATCC CRL-10679 / Arkansas</strain>
    </source>
</reference>
<sequence length="267" mass="29405">MTRVNIGIVGCLGKQGRRLVSEISASPYAQVSGGLVRSGNPHVGQILGEVVGCDCSVKITDSLEHLFETSDIVIEFTNPDMLLECIKMAEQKKKPLLSGTTGPAATEMVFEDYIKSIPFLWTTNVSFGVNILAKLVQEAAKKLFDYDIEIWEMHHRYKKDSPSGTSLILGKAAAKGRNVPFQMAQYVRGTPQEARKDVNTIGYSVSRGGADLSDHRVMFVSDEEMIDFNHRTLNKNLYAKGALKAALWLVKQPPGVYTMSDMMAAVE</sequence>
<keyword id="KW-0028">Amino-acid biosynthesis</keyword>
<keyword id="KW-0963">Cytoplasm</keyword>
<keyword id="KW-0220">Diaminopimelate biosynthesis</keyword>
<keyword id="KW-0457">Lysine biosynthesis</keyword>
<keyword id="KW-0520">NAD</keyword>
<keyword id="KW-0521">NADP</keyword>
<keyword id="KW-0560">Oxidoreductase</keyword>
<keyword id="KW-1185">Reference proteome</keyword>